<accession>A3NYX9</accession>
<comment type="function">
    <text evidence="1">Participates actively in the response to hyperosmotic and heat shock by preventing the aggregation of stress-denatured proteins, in association with DnaK and GrpE. It is the nucleotide exchange factor for DnaK and may function as a thermosensor. Unfolded proteins bind initially to DnaJ; upon interaction with the DnaJ-bound protein, DnaK hydrolyzes its bound ATP, resulting in the formation of a stable complex. GrpE releases ADP from DnaK; ATP binding to DnaK triggers the release of the substrate protein, thus completing the reaction cycle. Several rounds of ATP-dependent interactions between DnaJ, DnaK and GrpE are required for fully efficient folding.</text>
</comment>
<comment type="subunit">
    <text evidence="1">Homodimer.</text>
</comment>
<comment type="subcellular location">
    <subcellularLocation>
        <location evidence="1">Cytoplasm</location>
    </subcellularLocation>
</comment>
<comment type="similarity">
    <text evidence="1">Belongs to the GrpE family.</text>
</comment>
<sequence length="185" mass="19741">MENTQENPTDQTTEETGREAQAAEPAAQAAENAAPAAEAALAEAQAKIAELQESFLRAKAETENVRRRAQDDVAKAHKFAIEGFAENLLPVLDSLEAAVGDTSGDLAKVREGVELTLRQLTSALEKGRVAALNPVGEKFDPHLHQAISMVPADQEPNTVVAVLQKGYTIADRVLRPALVTVAQPK</sequence>
<gene>
    <name evidence="1" type="primary">grpE</name>
    <name type="ordered locus">BURPS1106A_3313</name>
</gene>
<reference key="1">
    <citation type="journal article" date="2010" name="Genome Biol. Evol.">
        <title>Continuing evolution of Burkholderia mallei through genome reduction and large-scale rearrangements.</title>
        <authorList>
            <person name="Losada L."/>
            <person name="Ronning C.M."/>
            <person name="DeShazer D."/>
            <person name="Woods D."/>
            <person name="Fedorova N."/>
            <person name="Kim H.S."/>
            <person name="Shabalina S.A."/>
            <person name="Pearson T.R."/>
            <person name="Brinkac L."/>
            <person name="Tan P."/>
            <person name="Nandi T."/>
            <person name="Crabtree J."/>
            <person name="Badger J."/>
            <person name="Beckstrom-Sternberg S."/>
            <person name="Saqib M."/>
            <person name="Schutzer S.E."/>
            <person name="Keim P."/>
            <person name="Nierman W.C."/>
        </authorList>
    </citation>
    <scope>NUCLEOTIDE SEQUENCE [LARGE SCALE GENOMIC DNA]</scope>
    <source>
        <strain>1106a</strain>
    </source>
</reference>
<dbReference type="EMBL" id="CP000572">
    <property type="protein sequence ID" value="ABN88741.1"/>
    <property type="molecule type" value="Genomic_DNA"/>
</dbReference>
<dbReference type="RefSeq" id="WP_004194243.1">
    <property type="nucleotide sequence ID" value="NC_009076.1"/>
</dbReference>
<dbReference type="SMR" id="A3NYX9"/>
<dbReference type="GeneID" id="93061417"/>
<dbReference type="KEGG" id="bpl:BURPS1106A_3313"/>
<dbReference type="HOGENOM" id="CLU_057217_6_1_4"/>
<dbReference type="Proteomes" id="UP000006738">
    <property type="component" value="Chromosome I"/>
</dbReference>
<dbReference type="GO" id="GO:0005829">
    <property type="term" value="C:cytosol"/>
    <property type="evidence" value="ECO:0007669"/>
    <property type="project" value="TreeGrafter"/>
</dbReference>
<dbReference type="GO" id="GO:0000774">
    <property type="term" value="F:adenyl-nucleotide exchange factor activity"/>
    <property type="evidence" value="ECO:0007669"/>
    <property type="project" value="InterPro"/>
</dbReference>
<dbReference type="GO" id="GO:0042803">
    <property type="term" value="F:protein homodimerization activity"/>
    <property type="evidence" value="ECO:0007669"/>
    <property type="project" value="InterPro"/>
</dbReference>
<dbReference type="GO" id="GO:0051087">
    <property type="term" value="F:protein-folding chaperone binding"/>
    <property type="evidence" value="ECO:0007669"/>
    <property type="project" value="InterPro"/>
</dbReference>
<dbReference type="GO" id="GO:0051082">
    <property type="term" value="F:unfolded protein binding"/>
    <property type="evidence" value="ECO:0007669"/>
    <property type="project" value="TreeGrafter"/>
</dbReference>
<dbReference type="GO" id="GO:0006457">
    <property type="term" value="P:protein folding"/>
    <property type="evidence" value="ECO:0007669"/>
    <property type="project" value="InterPro"/>
</dbReference>
<dbReference type="CDD" id="cd00446">
    <property type="entry name" value="GrpE"/>
    <property type="match status" value="1"/>
</dbReference>
<dbReference type="FunFam" id="2.30.22.10:FF:000001">
    <property type="entry name" value="Protein GrpE"/>
    <property type="match status" value="1"/>
</dbReference>
<dbReference type="Gene3D" id="3.90.20.20">
    <property type="match status" value="1"/>
</dbReference>
<dbReference type="Gene3D" id="2.30.22.10">
    <property type="entry name" value="Head domain of nucleotide exchange factor GrpE"/>
    <property type="match status" value="1"/>
</dbReference>
<dbReference type="HAMAP" id="MF_01151">
    <property type="entry name" value="GrpE"/>
    <property type="match status" value="1"/>
</dbReference>
<dbReference type="InterPro" id="IPR000740">
    <property type="entry name" value="GrpE"/>
</dbReference>
<dbReference type="InterPro" id="IPR013805">
    <property type="entry name" value="GrpE_coiled_coil"/>
</dbReference>
<dbReference type="InterPro" id="IPR009012">
    <property type="entry name" value="GrpE_head"/>
</dbReference>
<dbReference type="NCBIfam" id="NF010737">
    <property type="entry name" value="PRK14139.1"/>
    <property type="match status" value="1"/>
</dbReference>
<dbReference type="NCBIfam" id="NF010738">
    <property type="entry name" value="PRK14140.1"/>
    <property type="match status" value="1"/>
</dbReference>
<dbReference type="NCBIfam" id="NF010748">
    <property type="entry name" value="PRK14150.1"/>
    <property type="match status" value="1"/>
</dbReference>
<dbReference type="PANTHER" id="PTHR21237">
    <property type="entry name" value="GRPE PROTEIN"/>
    <property type="match status" value="1"/>
</dbReference>
<dbReference type="PANTHER" id="PTHR21237:SF23">
    <property type="entry name" value="GRPE PROTEIN HOMOLOG, MITOCHONDRIAL"/>
    <property type="match status" value="1"/>
</dbReference>
<dbReference type="Pfam" id="PF01025">
    <property type="entry name" value="GrpE"/>
    <property type="match status" value="1"/>
</dbReference>
<dbReference type="PRINTS" id="PR00773">
    <property type="entry name" value="GRPEPROTEIN"/>
</dbReference>
<dbReference type="SUPFAM" id="SSF58014">
    <property type="entry name" value="Coiled-coil domain of nucleotide exchange factor GrpE"/>
    <property type="match status" value="1"/>
</dbReference>
<dbReference type="SUPFAM" id="SSF51064">
    <property type="entry name" value="Head domain of nucleotide exchange factor GrpE"/>
    <property type="match status" value="1"/>
</dbReference>
<dbReference type="PROSITE" id="PS01071">
    <property type="entry name" value="GRPE"/>
    <property type="match status" value="1"/>
</dbReference>
<organism>
    <name type="scientific">Burkholderia pseudomallei (strain 1106a)</name>
    <dbReference type="NCBI Taxonomy" id="357348"/>
    <lineage>
        <taxon>Bacteria</taxon>
        <taxon>Pseudomonadati</taxon>
        <taxon>Pseudomonadota</taxon>
        <taxon>Betaproteobacteria</taxon>
        <taxon>Burkholderiales</taxon>
        <taxon>Burkholderiaceae</taxon>
        <taxon>Burkholderia</taxon>
        <taxon>pseudomallei group</taxon>
    </lineage>
</organism>
<keyword id="KW-0143">Chaperone</keyword>
<keyword id="KW-0963">Cytoplasm</keyword>
<keyword id="KW-0346">Stress response</keyword>
<feature type="chain" id="PRO_1000053556" description="Protein GrpE">
    <location>
        <begin position="1"/>
        <end position="185"/>
    </location>
</feature>
<feature type="region of interest" description="Disordered" evidence="2">
    <location>
        <begin position="1"/>
        <end position="38"/>
    </location>
</feature>
<feature type="compositionally biased region" description="Polar residues" evidence="2">
    <location>
        <begin position="1"/>
        <end position="11"/>
    </location>
</feature>
<feature type="compositionally biased region" description="Low complexity" evidence="2">
    <location>
        <begin position="19"/>
        <end position="38"/>
    </location>
</feature>
<proteinExistence type="inferred from homology"/>
<name>GRPE_BURP0</name>
<evidence type="ECO:0000255" key="1">
    <source>
        <dbReference type="HAMAP-Rule" id="MF_01151"/>
    </source>
</evidence>
<evidence type="ECO:0000256" key="2">
    <source>
        <dbReference type="SAM" id="MobiDB-lite"/>
    </source>
</evidence>
<protein>
    <recommendedName>
        <fullName evidence="1">Protein GrpE</fullName>
    </recommendedName>
    <alternativeName>
        <fullName evidence="1">HSP-70 cofactor</fullName>
    </alternativeName>
</protein>